<keyword id="KW-0472">Membrane</keyword>
<keyword id="KW-0496">Mitochondrion</keyword>
<keyword id="KW-0999">Mitochondrion inner membrane</keyword>
<keyword id="KW-1185">Reference proteome</keyword>
<keyword id="KW-0812">Transmembrane</keyword>
<keyword id="KW-1133">Transmembrane helix</keyword>
<reference key="1">
    <citation type="journal article" date="1992" name="Yeast">
        <title>The complete sequence of a 9,543 bp segment on the left arm of chromosome III reveals five open reading frames including glucokinase and the protein disulfide isomerase.</title>
        <authorList>
            <person name="Scherens B."/>
            <person name="Messenguy F."/>
            <person name="Gigot D."/>
            <person name="Dubois E."/>
        </authorList>
    </citation>
    <scope>NUCLEOTIDE SEQUENCE [GENOMIC DNA]</scope>
</reference>
<reference key="2">
    <citation type="journal article" date="1992" name="Nature">
        <title>The complete DNA sequence of yeast chromosome III.</title>
        <authorList>
            <person name="Oliver S.G."/>
            <person name="van der Aart Q.J.M."/>
            <person name="Agostoni-Carbone M.L."/>
            <person name="Aigle M."/>
            <person name="Alberghina L."/>
            <person name="Alexandraki D."/>
            <person name="Antoine G."/>
            <person name="Anwar R."/>
            <person name="Ballesta J.P.G."/>
            <person name="Benit P."/>
            <person name="Berben G."/>
            <person name="Bergantino E."/>
            <person name="Biteau N."/>
            <person name="Bolle P.-A."/>
            <person name="Bolotin-Fukuhara M."/>
            <person name="Brown A."/>
            <person name="Brown A.J.P."/>
            <person name="Buhler J.-M."/>
            <person name="Carcano C."/>
            <person name="Carignani G."/>
            <person name="Cederberg H."/>
            <person name="Chanet R."/>
            <person name="Contreras R."/>
            <person name="Crouzet M."/>
            <person name="Daignan-Fornier B."/>
            <person name="Defoor E."/>
            <person name="Delgado M.D."/>
            <person name="Demolder J."/>
            <person name="Doira C."/>
            <person name="Dubois E."/>
            <person name="Dujon B."/>
            <person name="Duesterhoeft A."/>
            <person name="Erdmann D."/>
            <person name="Esteban M."/>
            <person name="Fabre F."/>
            <person name="Fairhead C."/>
            <person name="Faye G."/>
            <person name="Feldmann H."/>
            <person name="Fiers W."/>
            <person name="Francingues-Gaillard M.-C."/>
            <person name="Franco L."/>
            <person name="Frontali L."/>
            <person name="Fukuhara H."/>
            <person name="Fuller L.J."/>
            <person name="Galland P."/>
            <person name="Gent M.E."/>
            <person name="Gigot D."/>
            <person name="Gilliquet V."/>
            <person name="Glansdorff N."/>
            <person name="Goffeau A."/>
            <person name="Grenson M."/>
            <person name="Grisanti P."/>
            <person name="Grivell L.A."/>
            <person name="de Haan M."/>
            <person name="Haasemann M."/>
            <person name="Hatat D."/>
            <person name="Hoenicka J."/>
            <person name="Hegemann J.H."/>
            <person name="Herbert C.J."/>
            <person name="Hilger F."/>
            <person name="Hohmann S."/>
            <person name="Hollenberg C.P."/>
            <person name="Huse K."/>
            <person name="Iborra F."/>
            <person name="Indge K.J."/>
            <person name="Isono K."/>
            <person name="Jacq C."/>
            <person name="Jacquet M."/>
            <person name="James C.M."/>
            <person name="Jauniaux J.-C."/>
            <person name="Jia Y."/>
            <person name="Jimenez A."/>
            <person name="Kelly A."/>
            <person name="Kleinhans U."/>
            <person name="Kreisl P."/>
            <person name="Lanfranchi G."/>
            <person name="Lewis C."/>
            <person name="van der Linden C.G."/>
            <person name="Lucchini G."/>
            <person name="Lutzenkirchen K."/>
            <person name="Maat M.J."/>
            <person name="Mallet L."/>
            <person name="Mannhaupt G."/>
            <person name="Martegani E."/>
            <person name="Mathieu A."/>
            <person name="Maurer C.T.C."/>
            <person name="McConnell D."/>
            <person name="McKee R.A."/>
            <person name="Messenguy F."/>
            <person name="Mewes H.-W."/>
            <person name="Molemans F."/>
            <person name="Montague M.A."/>
            <person name="Muzi Falconi M."/>
            <person name="Navas L."/>
            <person name="Newlon C.S."/>
            <person name="Noone D."/>
            <person name="Pallier C."/>
            <person name="Panzeri L."/>
            <person name="Pearson B.M."/>
            <person name="Perea J."/>
            <person name="Philippsen P."/>
            <person name="Pierard A."/>
            <person name="Planta R.J."/>
            <person name="Plevani P."/>
            <person name="Poetsch B."/>
            <person name="Pohl F.M."/>
            <person name="Purnelle B."/>
            <person name="Ramezani Rad M."/>
            <person name="Rasmussen S.W."/>
            <person name="Raynal A."/>
            <person name="Remacha M.A."/>
            <person name="Richterich P."/>
            <person name="Roberts A.B."/>
            <person name="Rodriguez F."/>
            <person name="Sanz E."/>
            <person name="Schaaff-Gerstenschlaeger I."/>
            <person name="Scherens B."/>
            <person name="Schweitzer B."/>
            <person name="Shu Y."/>
            <person name="Skala J."/>
            <person name="Slonimski P.P."/>
            <person name="Sor F."/>
            <person name="Soustelle C."/>
            <person name="Spiegelberg R."/>
            <person name="Stateva L.I."/>
            <person name="Steensma H.Y."/>
            <person name="Steiner S."/>
            <person name="Thierry A."/>
            <person name="Thireos G."/>
            <person name="Tzermia M."/>
            <person name="Urrestarazu L.A."/>
            <person name="Valle G."/>
            <person name="Vetter I."/>
            <person name="van Vliet-Reedijk J.C."/>
            <person name="Voet M."/>
            <person name="Volckaert G."/>
            <person name="Vreken P."/>
            <person name="Wang H."/>
            <person name="Warmington J.R."/>
            <person name="von Wettstein D."/>
            <person name="Wicksteed B.L."/>
            <person name="Wilson C."/>
            <person name="Wurst H."/>
            <person name="Xu G."/>
            <person name="Yoshikawa A."/>
            <person name="Zimmermann F.K."/>
            <person name="Sgouros J.G."/>
        </authorList>
    </citation>
    <scope>NUCLEOTIDE SEQUENCE [LARGE SCALE GENOMIC DNA]</scope>
    <source>
        <strain>ATCC 204508 / S288c</strain>
    </source>
</reference>
<reference key="3">
    <citation type="journal article" date="2014" name="G3 (Bethesda)">
        <title>The reference genome sequence of Saccharomyces cerevisiae: Then and now.</title>
        <authorList>
            <person name="Engel S.R."/>
            <person name="Dietrich F.S."/>
            <person name="Fisk D.G."/>
            <person name="Binkley G."/>
            <person name="Balakrishnan R."/>
            <person name="Costanzo M.C."/>
            <person name="Dwight S.S."/>
            <person name="Hitz B.C."/>
            <person name="Karra K."/>
            <person name="Nash R.S."/>
            <person name="Weng S."/>
            <person name="Wong E.D."/>
            <person name="Lloyd P."/>
            <person name="Skrzypek M.S."/>
            <person name="Miyasato S.R."/>
            <person name="Simison M."/>
            <person name="Cherry J.M."/>
        </authorList>
    </citation>
    <scope>GENOME REANNOTATION</scope>
    <source>
        <strain>ATCC 204508 / S288c</strain>
    </source>
</reference>
<reference key="4">
    <citation type="journal article" date="2003" name="Nature">
        <title>Global analysis of protein localization in budding yeast.</title>
        <authorList>
            <person name="Huh W.-K."/>
            <person name="Falvo J.V."/>
            <person name="Gerke L.C."/>
            <person name="Carroll A.S."/>
            <person name="Howson R.W."/>
            <person name="Weissman J.S."/>
            <person name="O'Shea E.K."/>
        </authorList>
    </citation>
    <scope>SUBCELLULAR LOCATION [LARGE SCALE ANALYSIS]</scope>
</reference>
<reference key="5">
    <citation type="journal article" date="2003" name="Nature">
        <title>Global analysis of protein expression in yeast.</title>
        <authorList>
            <person name="Ghaemmaghami S."/>
            <person name="Huh W.-K."/>
            <person name="Bower K."/>
            <person name="Howson R.W."/>
            <person name="Belle A."/>
            <person name="Dephoure N."/>
            <person name="O'Shea E.K."/>
            <person name="Weissman J.S."/>
        </authorList>
    </citation>
    <scope>LEVEL OF PROTEIN EXPRESSION [LARGE SCALE ANALYSIS]</scope>
</reference>
<reference key="6">
    <citation type="journal article" date="2003" name="Proc. Natl. Acad. Sci. U.S.A.">
        <title>The proteome of Saccharomyces cerevisiae mitochondria.</title>
        <authorList>
            <person name="Sickmann A."/>
            <person name="Reinders J."/>
            <person name="Wagner Y."/>
            <person name="Joppich C."/>
            <person name="Zahedi R.P."/>
            <person name="Meyer H.E."/>
            <person name="Schoenfisch B."/>
            <person name="Perschil I."/>
            <person name="Chacinska A."/>
            <person name="Guiard B."/>
            <person name="Rehling P."/>
            <person name="Pfanner N."/>
            <person name="Meisinger C."/>
        </authorList>
    </citation>
    <scope>SUBCELLULAR LOCATION [LARGE SCALE ANALYSIS]</scope>
    <source>
        <strain>ATCC 76625 / YPH499</strain>
    </source>
</reference>
<reference key="7">
    <citation type="journal article" date="2006" name="Mol. Biol. Cell">
        <title>A genomewide screen for petite-negative yeast strains yields a new subunit of the i-AAA protease complex.</title>
        <authorList>
            <person name="Dunn C.D."/>
            <person name="Lee M.S."/>
            <person name="Spencer F.A."/>
            <person name="Jensen R.E."/>
        </authorList>
    </citation>
    <scope>FUNCTION</scope>
    <scope>SUBCELLULAR LOCATION</scope>
    <scope>TOPOLOGY</scope>
    <scope>INTERACTION WITH YME1</scope>
    <scope>IDENTIFICATION IN THE I-AAA COMPLEX</scope>
</reference>
<reference key="8">
    <citation type="journal article" date="2008" name="Mol. Biol. Cell">
        <title>Mgr3p and Mgr1p are adaptors for the mitochondrial i-AAA protease complex.</title>
        <authorList>
            <person name="Dunn C.D."/>
            <person name="Tamura Y."/>
            <person name="Sesaki H."/>
            <person name="Jensen R.E."/>
        </authorList>
    </citation>
    <scope>FUNCTION</scope>
    <scope>SUBUNIT</scope>
</reference>
<proteinExistence type="evidence at protein level"/>
<sequence>MAVFTPPSGNSNSTDHTHTQDDHDKDDNDIKKFYIRPSLGLKLWGPLVPAPDNLPGLYTLITIQSAVGFFALWRLRRLYKLPPPRRIATGTHSDLSFGELPSEMIVNGKTKIKKDIADFPTLNRFSTTHGDIVLAPPPIIPRQSRFVSVRKLLWGLFGSLLLSQSLLELTRLNFLKYDPWCDEMKSVRDKKFFNNIVKYYHEGIDPTKIKVKDAMNGTPLSTNIPEVKQSVALARAQVEAQNPIIKWFGPLEYKPMSFNEYLNRMEFHLDMFEFFQNKRNIRENSIELINSISHNPQSSSTGLEGLSESKKLHLQNVEKRLHFLASSGDSISAPVKKRSSTTLSRGVILPHDTKGPQDIDLDTIRSLYDPWMTLALETSLSIKFIPTTMPSHTKTPTSTDQPLPGPTPKALTNEKTH</sequence>
<accession>P25573</accession>
<accession>D6VQX2</accession>
<organism>
    <name type="scientific">Saccharomyces cerevisiae (strain ATCC 204508 / S288c)</name>
    <name type="common">Baker's yeast</name>
    <dbReference type="NCBI Taxonomy" id="559292"/>
    <lineage>
        <taxon>Eukaryota</taxon>
        <taxon>Fungi</taxon>
        <taxon>Dikarya</taxon>
        <taxon>Ascomycota</taxon>
        <taxon>Saccharomycotina</taxon>
        <taxon>Saccharomycetes</taxon>
        <taxon>Saccharomycetales</taxon>
        <taxon>Saccharomycetaceae</taxon>
        <taxon>Saccharomyces</taxon>
    </lineage>
</organism>
<gene>
    <name type="primary">MGR1</name>
    <name type="ordered locus">YCL044C</name>
    <name type="ORF">YCL314</name>
    <name type="ORF">YCL44C</name>
</gene>
<name>MGR1_YEAST</name>
<comment type="function">
    <text evidence="6 7">Component of the mitochondrial inner membrane i-AAA protease supercomplex required for mitochondrial inner membrane protein turnover. Together with MGR3, functions in an adapter complex that targets substrates to the i-AAA protease for degradation. Required for growth of cells lacking the mitochondrial genome.</text>
</comment>
<comment type="subunit">
    <text evidence="6 7">Component of the mitochondrial inner membrane i-AAA protease supercomplex composed of MGR1, MGR3 and YME1. With MGR3, forms a subcomplex that binds to YME1 and to substrates to facilitate proteolysis. Interacts directly with YME1.</text>
</comment>
<comment type="interaction">
    <interactant intactId="EBI-21740">
        <id>P25573</id>
    </interactant>
    <interactant intactId="EBI-27785">
        <id>P32795</id>
        <label>YME1</label>
    </interactant>
    <organismsDiffer>false</organismsDiffer>
    <experiments>4</experiments>
</comment>
<comment type="subcellular location">
    <subcellularLocation>
        <location evidence="3 5 6">Mitochondrion inner membrane</location>
        <topology evidence="3 5 6">Multi-pass membrane protein</topology>
    </subcellularLocation>
</comment>
<comment type="miscellaneous">
    <text evidence="4">Present with 3410 molecules/cell in log phase SD medium.</text>
</comment>
<comment type="similarity">
    <text evidence="8">Belongs to the MGR1 family.</text>
</comment>
<dbReference type="EMBL" id="X59720">
    <property type="protein sequence ID" value="CAA42372.1"/>
    <property type="molecule type" value="Genomic_DNA"/>
</dbReference>
<dbReference type="EMBL" id="BK006937">
    <property type="protein sequence ID" value="DAA07441.1"/>
    <property type="molecule type" value="Genomic_DNA"/>
</dbReference>
<dbReference type="PIR" id="S19373">
    <property type="entry name" value="S19373"/>
</dbReference>
<dbReference type="RefSeq" id="NP_009886.1">
    <property type="nucleotide sequence ID" value="NM_001178689.1"/>
</dbReference>
<dbReference type="BioGRID" id="30940">
    <property type="interactions" value="371"/>
</dbReference>
<dbReference type="ComplexPortal" id="CPX-1655">
    <property type="entry name" value="i-AAA complex"/>
</dbReference>
<dbReference type="DIP" id="DIP-5031N"/>
<dbReference type="FunCoup" id="P25573">
    <property type="interactions" value="76"/>
</dbReference>
<dbReference type="IntAct" id="P25573">
    <property type="interactions" value="10"/>
</dbReference>
<dbReference type="MINT" id="P25573"/>
<dbReference type="STRING" id="4932.YCL044C"/>
<dbReference type="GlyGen" id="P25573">
    <property type="glycosylation" value="1 site"/>
</dbReference>
<dbReference type="PaxDb" id="4932-YCL044C"/>
<dbReference type="PeptideAtlas" id="P25573"/>
<dbReference type="EnsemblFungi" id="YCL044C_mRNA">
    <property type="protein sequence ID" value="YCL044C"/>
    <property type="gene ID" value="YCL044C"/>
</dbReference>
<dbReference type="GeneID" id="850313"/>
<dbReference type="KEGG" id="sce:YCL044C"/>
<dbReference type="AGR" id="SGD:S000000549"/>
<dbReference type="SGD" id="S000000549">
    <property type="gene designation" value="MGR1"/>
</dbReference>
<dbReference type="VEuPathDB" id="FungiDB:YCL044C"/>
<dbReference type="eggNOG" id="ENOG502QR67">
    <property type="taxonomic scope" value="Eukaryota"/>
</dbReference>
<dbReference type="HOGENOM" id="CLU_039216_0_0_1"/>
<dbReference type="InParanoid" id="P25573"/>
<dbReference type="OMA" id="FYHEGID"/>
<dbReference type="OrthoDB" id="4087899at2759"/>
<dbReference type="BioCyc" id="YEAST:G3O-29300-MONOMER"/>
<dbReference type="BioGRID-ORCS" id="850313">
    <property type="hits" value="0 hits in 10 CRISPR screens"/>
</dbReference>
<dbReference type="PRO" id="PR:P25573"/>
<dbReference type="Proteomes" id="UP000002311">
    <property type="component" value="Chromosome III"/>
</dbReference>
<dbReference type="RNAct" id="P25573">
    <property type="molecule type" value="protein"/>
</dbReference>
<dbReference type="GO" id="GO:0031942">
    <property type="term" value="C:i-AAA complex"/>
    <property type="evidence" value="ECO:0000314"/>
    <property type="project" value="SGD"/>
</dbReference>
<dbReference type="GO" id="GO:0005743">
    <property type="term" value="C:mitochondrial inner membrane"/>
    <property type="evidence" value="ECO:0000303"/>
    <property type="project" value="ComplexPortal"/>
</dbReference>
<dbReference type="GO" id="GO:0005739">
    <property type="term" value="C:mitochondrion"/>
    <property type="evidence" value="ECO:0007005"/>
    <property type="project" value="SGD"/>
</dbReference>
<dbReference type="GO" id="GO:0051787">
    <property type="term" value="F:misfolded protein binding"/>
    <property type="evidence" value="ECO:0000314"/>
    <property type="project" value="SGD"/>
</dbReference>
<dbReference type="GO" id="GO:0030163">
    <property type="term" value="P:protein catabolic process"/>
    <property type="evidence" value="ECO:0000315"/>
    <property type="project" value="ComplexPortal"/>
</dbReference>
<dbReference type="GO" id="GO:0045041">
    <property type="term" value="P:protein import into mitochondrial intermembrane space"/>
    <property type="evidence" value="ECO:0000303"/>
    <property type="project" value="ComplexPortal"/>
</dbReference>
<dbReference type="GO" id="GO:0006515">
    <property type="term" value="P:protein quality control for misfolded or incompletely synthesized proteins"/>
    <property type="evidence" value="ECO:0000315"/>
    <property type="project" value="SGD"/>
</dbReference>
<dbReference type="InterPro" id="IPR013911">
    <property type="entry name" value="i-AAA_Mgr1"/>
</dbReference>
<dbReference type="Pfam" id="PF08602">
    <property type="entry name" value="Mgr1"/>
    <property type="match status" value="1"/>
</dbReference>
<feature type="chain" id="PRO_0000202546" description="Mitochondrial inner membrane i-AAA protease supercomplex subunit MGR1">
    <location>
        <begin position="1"/>
        <end position="417"/>
    </location>
</feature>
<feature type="topological domain" description="Mitochondrial intermembrane" evidence="6">
    <location>
        <begin position="1"/>
        <end position="56"/>
    </location>
</feature>
<feature type="transmembrane region" description="Helical" evidence="1">
    <location>
        <begin position="57"/>
        <end position="73"/>
    </location>
</feature>
<feature type="topological domain" description="Mitochondrial matrix" evidence="6">
    <location>
        <begin position="74"/>
        <end position="151"/>
    </location>
</feature>
<feature type="transmembrane region" description="Helical" evidence="1">
    <location>
        <begin position="152"/>
        <end position="169"/>
    </location>
</feature>
<feature type="topological domain" description="Mitochondrial intermembrane" evidence="6">
    <location>
        <begin position="170"/>
        <end position="417"/>
    </location>
</feature>
<feature type="region of interest" description="Disordered" evidence="2">
    <location>
        <begin position="1"/>
        <end position="28"/>
    </location>
</feature>
<feature type="region of interest" description="Disordered" evidence="2">
    <location>
        <begin position="391"/>
        <end position="417"/>
    </location>
</feature>
<feature type="compositionally biased region" description="Basic and acidic residues" evidence="2">
    <location>
        <begin position="15"/>
        <end position="28"/>
    </location>
</feature>
<feature type="compositionally biased region" description="Polar residues" evidence="2">
    <location>
        <begin position="391"/>
        <end position="401"/>
    </location>
</feature>
<protein>
    <recommendedName>
        <fullName>Mitochondrial inner membrane i-AAA protease supercomplex subunit MGR1</fullName>
    </recommendedName>
    <alternativeName>
        <fullName>Mitochondrial genome-required protein 1</fullName>
    </alternativeName>
</protein>
<evidence type="ECO:0000255" key="1"/>
<evidence type="ECO:0000256" key="2">
    <source>
        <dbReference type="SAM" id="MobiDB-lite"/>
    </source>
</evidence>
<evidence type="ECO:0000269" key="3">
    <source>
    </source>
</evidence>
<evidence type="ECO:0000269" key="4">
    <source>
    </source>
</evidence>
<evidence type="ECO:0000269" key="5">
    <source>
    </source>
</evidence>
<evidence type="ECO:0000269" key="6">
    <source>
    </source>
</evidence>
<evidence type="ECO:0000269" key="7">
    <source>
    </source>
</evidence>
<evidence type="ECO:0000305" key="8"/>